<name>RSMG_ACISJ</name>
<proteinExistence type="inferred from homology"/>
<gene>
    <name evidence="1" type="primary">rsmG</name>
    <name type="ordered locus">Ajs_0027</name>
</gene>
<keyword id="KW-0963">Cytoplasm</keyword>
<keyword id="KW-0489">Methyltransferase</keyword>
<keyword id="KW-0698">rRNA processing</keyword>
<keyword id="KW-0949">S-adenosyl-L-methionine</keyword>
<keyword id="KW-0808">Transferase</keyword>
<protein>
    <recommendedName>
        <fullName evidence="1">Ribosomal RNA small subunit methyltransferase G</fullName>
        <ecNumber evidence="1">2.1.1.170</ecNumber>
    </recommendedName>
    <alternativeName>
        <fullName evidence="1">16S rRNA 7-methylguanosine methyltransferase</fullName>
        <shortName evidence="1">16S rRNA m7G methyltransferase</shortName>
    </alternativeName>
</protein>
<reference key="1">
    <citation type="submission" date="2006-12" db="EMBL/GenBank/DDBJ databases">
        <title>Complete sequence of chromosome 1 of Acidovorax sp. JS42.</title>
        <authorList>
            <person name="Copeland A."/>
            <person name="Lucas S."/>
            <person name="Lapidus A."/>
            <person name="Barry K."/>
            <person name="Detter J.C."/>
            <person name="Glavina del Rio T."/>
            <person name="Dalin E."/>
            <person name="Tice H."/>
            <person name="Pitluck S."/>
            <person name="Chertkov O."/>
            <person name="Brettin T."/>
            <person name="Bruce D."/>
            <person name="Han C."/>
            <person name="Tapia R."/>
            <person name="Gilna P."/>
            <person name="Schmutz J."/>
            <person name="Larimer F."/>
            <person name="Land M."/>
            <person name="Hauser L."/>
            <person name="Kyrpides N."/>
            <person name="Kim E."/>
            <person name="Stahl D."/>
            <person name="Richardson P."/>
        </authorList>
    </citation>
    <scope>NUCLEOTIDE SEQUENCE [LARGE SCALE GENOMIC DNA]</scope>
    <source>
        <strain>JS42</strain>
    </source>
</reference>
<dbReference type="EC" id="2.1.1.170" evidence="1"/>
<dbReference type="EMBL" id="CP000539">
    <property type="protein sequence ID" value="ABM40283.1"/>
    <property type="molecule type" value="Genomic_DNA"/>
</dbReference>
<dbReference type="SMR" id="A1W208"/>
<dbReference type="STRING" id="232721.Ajs_0027"/>
<dbReference type="KEGG" id="ajs:Ajs_0027"/>
<dbReference type="eggNOG" id="COG0357">
    <property type="taxonomic scope" value="Bacteria"/>
</dbReference>
<dbReference type="HOGENOM" id="CLU_065341_2_0_4"/>
<dbReference type="Proteomes" id="UP000000645">
    <property type="component" value="Chromosome"/>
</dbReference>
<dbReference type="GO" id="GO:0005829">
    <property type="term" value="C:cytosol"/>
    <property type="evidence" value="ECO:0007669"/>
    <property type="project" value="TreeGrafter"/>
</dbReference>
<dbReference type="GO" id="GO:0070043">
    <property type="term" value="F:rRNA (guanine-N7-)-methyltransferase activity"/>
    <property type="evidence" value="ECO:0007669"/>
    <property type="project" value="UniProtKB-UniRule"/>
</dbReference>
<dbReference type="CDD" id="cd02440">
    <property type="entry name" value="AdoMet_MTases"/>
    <property type="match status" value="1"/>
</dbReference>
<dbReference type="Gene3D" id="3.40.50.150">
    <property type="entry name" value="Vaccinia Virus protein VP39"/>
    <property type="match status" value="1"/>
</dbReference>
<dbReference type="HAMAP" id="MF_00074">
    <property type="entry name" value="16SrRNA_methyltr_G"/>
    <property type="match status" value="1"/>
</dbReference>
<dbReference type="InterPro" id="IPR003682">
    <property type="entry name" value="rRNA_ssu_MeTfrase_G"/>
</dbReference>
<dbReference type="InterPro" id="IPR029063">
    <property type="entry name" value="SAM-dependent_MTases_sf"/>
</dbReference>
<dbReference type="NCBIfam" id="TIGR00138">
    <property type="entry name" value="rsmG_gidB"/>
    <property type="match status" value="1"/>
</dbReference>
<dbReference type="PANTHER" id="PTHR31760">
    <property type="entry name" value="S-ADENOSYL-L-METHIONINE-DEPENDENT METHYLTRANSFERASES SUPERFAMILY PROTEIN"/>
    <property type="match status" value="1"/>
</dbReference>
<dbReference type="PANTHER" id="PTHR31760:SF0">
    <property type="entry name" value="S-ADENOSYL-L-METHIONINE-DEPENDENT METHYLTRANSFERASES SUPERFAMILY PROTEIN"/>
    <property type="match status" value="1"/>
</dbReference>
<dbReference type="Pfam" id="PF02527">
    <property type="entry name" value="GidB"/>
    <property type="match status" value="1"/>
</dbReference>
<dbReference type="PIRSF" id="PIRSF003078">
    <property type="entry name" value="GidB"/>
    <property type="match status" value="1"/>
</dbReference>
<dbReference type="SUPFAM" id="SSF53335">
    <property type="entry name" value="S-adenosyl-L-methionine-dependent methyltransferases"/>
    <property type="match status" value="1"/>
</dbReference>
<comment type="function">
    <text evidence="1">Specifically methylates the N7 position of guanine in position 527 of 16S rRNA.</text>
</comment>
<comment type="catalytic activity">
    <reaction evidence="1">
        <text>guanosine(527) in 16S rRNA + S-adenosyl-L-methionine = N(7)-methylguanosine(527) in 16S rRNA + S-adenosyl-L-homocysteine</text>
        <dbReference type="Rhea" id="RHEA:42732"/>
        <dbReference type="Rhea" id="RHEA-COMP:10209"/>
        <dbReference type="Rhea" id="RHEA-COMP:10210"/>
        <dbReference type="ChEBI" id="CHEBI:57856"/>
        <dbReference type="ChEBI" id="CHEBI:59789"/>
        <dbReference type="ChEBI" id="CHEBI:74269"/>
        <dbReference type="ChEBI" id="CHEBI:74480"/>
        <dbReference type="EC" id="2.1.1.170"/>
    </reaction>
</comment>
<comment type="subcellular location">
    <subcellularLocation>
        <location evidence="1">Cytoplasm</location>
    </subcellularLocation>
</comment>
<comment type="similarity">
    <text evidence="1">Belongs to the methyltransferase superfamily. RNA methyltransferase RsmG family.</text>
</comment>
<feature type="chain" id="PRO_0000335306" description="Ribosomal RNA small subunit methyltransferase G">
    <location>
        <begin position="1"/>
        <end position="226"/>
    </location>
</feature>
<feature type="binding site" evidence="1">
    <location>
        <position position="95"/>
    </location>
    <ligand>
        <name>S-adenosyl-L-methionine</name>
        <dbReference type="ChEBI" id="CHEBI:59789"/>
    </ligand>
</feature>
<feature type="binding site" evidence="1">
    <location>
        <position position="100"/>
    </location>
    <ligand>
        <name>S-adenosyl-L-methionine</name>
        <dbReference type="ChEBI" id="CHEBI:59789"/>
    </ligand>
</feature>
<feature type="binding site" evidence="1">
    <location>
        <begin position="146"/>
        <end position="147"/>
    </location>
    <ligand>
        <name>S-adenosyl-L-methionine</name>
        <dbReference type="ChEBI" id="CHEBI:59789"/>
    </ligand>
</feature>
<feature type="binding site" evidence="1">
    <location>
        <position position="159"/>
    </location>
    <ligand>
        <name>S-adenosyl-L-methionine</name>
        <dbReference type="ChEBI" id="CHEBI:59789"/>
    </ligand>
</feature>
<evidence type="ECO:0000255" key="1">
    <source>
        <dbReference type="HAMAP-Rule" id="MF_00074"/>
    </source>
</evidence>
<accession>A1W208</accession>
<organism>
    <name type="scientific">Acidovorax sp. (strain JS42)</name>
    <dbReference type="NCBI Taxonomy" id="232721"/>
    <lineage>
        <taxon>Bacteria</taxon>
        <taxon>Pseudomonadati</taxon>
        <taxon>Pseudomonadota</taxon>
        <taxon>Betaproteobacteria</taxon>
        <taxon>Burkholderiales</taxon>
        <taxon>Comamonadaceae</taxon>
        <taxon>Acidovorax</taxon>
    </lineage>
</organism>
<sequence>MSVVSNTSFEHALREGANALGLDLSEAQITQLLDFLALLQKWNKVYNLTAVRDPQEMLTHHLLDSLAAVPPLRRHVAQRGQDSAARPGARLLDVGSGGGLPGVVFAICCPEVDVSCVDTVAKKAAFIQQAAGTLGLSNLHGIHARVETLAGPFDVVSCRAFAALADFTAWSRQALAPHGVWLAMKGKHPHDEIAALPADVSVFHVEQLTVPGLQAERCILWLRPVA</sequence>